<sequence length="227" mass="24951">MKFLANLKCNHTRASFREYAKILDENLSANDDVSVFAPASAFDEKKHMFRLGAQNFYPCESGAFTGEIGKAMLDEFEIKDVLIGHSERREILNESEEFLRSKFDFAAKNGWNVIYCIGENLSTNESGATKEFLSRQLENIDLGYKNLVIAYEPIWAIGTGRSASIEQIDEVLSFLKTKANVPLLYGGSVNAANIADIAGIKSCDGVLVGTASWDANNFLGLIGAASR</sequence>
<reference key="1">
    <citation type="submission" date="2007-10" db="EMBL/GenBank/DDBJ databases">
        <title>Genome sequence of Campylobacter concisus 13826 isolated from human feces.</title>
        <authorList>
            <person name="Fouts D.E."/>
            <person name="Mongodin E.F."/>
            <person name="Puiu D."/>
            <person name="Sebastian Y."/>
            <person name="Miller W.G."/>
            <person name="Mandrell R.E."/>
            <person name="On S."/>
            <person name="Nelson K.E."/>
        </authorList>
    </citation>
    <scope>NUCLEOTIDE SEQUENCE [LARGE SCALE GENOMIC DNA]</scope>
    <source>
        <strain>13826</strain>
    </source>
</reference>
<evidence type="ECO:0000255" key="1">
    <source>
        <dbReference type="HAMAP-Rule" id="MF_00147"/>
    </source>
</evidence>
<protein>
    <recommendedName>
        <fullName evidence="1">Triosephosphate isomerase</fullName>
        <shortName evidence="1">TIM</shortName>
        <shortName evidence="1">TPI</shortName>
        <ecNumber evidence="1">5.3.1.1</ecNumber>
    </recommendedName>
    <alternativeName>
        <fullName evidence="1">Triose-phosphate isomerase</fullName>
    </alternativeName>
</protein>
<proteinExistence type="inferred from homology"/>
<dbReference type="EC" id="5.3.1.1" evidence="1"/>
<dbReference type="EMBL" id="CP000792">
    <property type="protein sequence ID" value="EAT99273.1"/>
    <property type="molecule type" value="Genomic_DNA"/>
</dbReference>
<dbReference type="RefSeq" id="WP_012140238.1">
    <property type="nucleotide sequence ID" value="NC_009802.2"/>
</dbReference>
<dbReference type="SMR" id="A7ZEZ4"/>
<dbReference type="STRING" id="360104.CCC13826_0514"/>
<dbReference type="KEGG" id="cco:CCC13826_0514"/>
<dbReference type="eggNOG" id="COG0149">
    <property type="taxonomic scope" value="Bacteria"/>
</dbReference>
<dbReference type="HOGENOM" id="CLU_024251_2_3_7"/>
<dbReference type="OrthoDB" id="9809429at2"/>
<dbReference type="UniPathway" id="UPA00109">
    <property type="reaction ID" value="UER00189"/>
</dbReference>
<dbReference type="UniPathway" id="UPA00138"/>
<dbReference type="Proteomes" id="UP000001121">
    <property type="component" value="Chromosome"/>
</dbReference>
<dbReference type="GO" id="GO:0005829">
    <property type="term" value="C:cytosol"/>
    <property type="evidence" value="ECO:0007669"/>
    <property type="project" value="TreeGrafter"/>
</dbReference>
<dbReference type="GO" id="GO:0004807">
    <property type="term" value="F:triose-phosphate isomerase activity"/>
    <property type="evidence" value="ECO:0007669"/>
    <property type="project" value="UniProtKB-UniRule"/>
</dbReference>
<dbReference type="GO" id="GO:0006094">
    <property type="term" value="P:gluconeogenesis"/>
    <property type="evidence" value="ECO:0007669"/>
    <property type="project" value="UniProtKB-UniRule"/>
</dbReference>
<dbReference type="GO" id="GO:0046166">
    <property type="term" value="P:glyceraldehyde-3-phosphate biosynthetic process"/>
    <property type="evidence" value="ECO:0007669"/>
    <property type="project" value="TreeGrafter"/>
</dbReference>
<dbReference type="GO" id="GO:0019563">
    <property type="term" value="P:glycerol catabolic process"/>
    <property type="evidence" value="ECO:0007669"/>
    <property type="project" value="TreeGrafter"/>
</dbReference>
<dbReference type="GO" id="GO:0006096">
    <property type="term" value="P:glycolytic process"/>
    <property type="evidence" value="ECO:0007669"/>
    <property type="project" value="UniProtKB-UniRule"/>
</dbReference>
<dbReference type="CDD" id="cd00311">
    <property type="entry name" value="TIM"/>
    <property type="match status" value="1"/>
</dbReference>
<dbReference type="Gene3D" id="3.20.20.70">
    <property type="entry name" value="Aldolase class I"/>
    <property type="match status" value="1"/>
</dbReference>
<dbReference type="HAMAP" id="MF_00147_B">
    <property type="entry name" value="TIM_B"/>
    <property type="match status" value="1"/>
</dbReference>
<dbReference type="InterPro" id="IPR013785">
    <property type="entry name" value="Aldolase_TIM"/>
</dbReference>
<dbReference type="InterPro" id="IPR035990">
    <property type="entry name" value="TIM_sf"/>
</dbReference>
<dbReference type="InterPro" id="IPR022896">
    <property type="entry name" value="TrioseP_Isoase_bac/euk"/>
</dbReference>
<dbReference type="InterPro" id="IPR000652">
    <property type="entry name" value="Triosephosphate_isomerase"/>
</dbReference>
<dbReference type="InterPro" id="IPR020861">
    <property type="entry name" value="Triosephosphate_isomerase_AS"/>
</dbReference>
<dbReference type="NCBIfam" id="NF000728">
    <property type="entry name" value="PRK00042.3-2"/>
    <property type="match status" value="1"/>
</dbReference>
<dbReference type="PANTHER" id="PTHR21139">
    <property type="entry name" value="TRIOSEPHOSPHATE ISOMERASE"/>
    <property type="match status" value="1"/>
</dbReference>
<dbReference type="PANTHER" id="PTHR21139:SF42">
    <property type="entry name" value="TRIOSEPHOSPHATE ISOMERASE"/>
    <property type="match status" value="1"/>
</dbReference>
<dbReference type="Pfam" id="PF00121">
    <property type="entry name" value="TIM"/>
    <property type="match status" value="1"/>
</dbReference>
<dbReference type="SUPFAM" id="SSF51351">
    <property type="entry name" value="Triosephosphate isomerase (TIM)"/>
    <property type="match status" value="1"/>
</dbReference>
<dbReference type="PROSITE" id="PS00171">
    <property type="entry name" value="TIM_1"/>
    <property type="match status" value="1"/>
</dbReference>
<dbReference type="PROSITE" id="PS51440">
    <property type="entry name" value="TIM_2"/>
    <property type="match status" value="1"/>
</dbReference>
<accession>A7ZEZ4</accession>
<gene>
    <name evidence="1" type="primary">tpiA</name>
    <name type="ordered locus">Ccon26_15040</name>
    <name type="ORF">CCC13826_0514</name>
</gene>
<feature type="chain" id="PRO_1000009840" description="Triosephosphate isomerase">
    <location>
        <begin position="1"/>
        <end position="227"/>
    </location>
</feature>
<feature type="active site" description="Electrophile" evidence="1">
    <location>
        <position position="85"/>
    </location>
</feature>
<feature type="active site" description="Proton acceptor" evidence="1">
    <location>
        <position position="152"/>
    </location>
</feature>
<feature type="binding site" evidence="1">
    <location>
        <begin position="6"/>
        <end position="8"/>
    </location>
    <ligand>
        <name>substrate</name>
    </ligand>
</feature>
<feature type="binding site" evidence="1">
    <location>
        <position position="158"/>
    </location>
    <ligand>
        <name>substrate</name>
    </ligand>
</feature>
<feature type="binding site" evidence="1">
    <location>
        <position position="188"/>
    </location>
    <ligand>
        <name>substrate</name>
    </ligand>
</feature>
<keyword id="KW-0963">Cytoplasm</keyword>
<keyword id="KW-0312">Gluconeogenesis</keyword>
<keyword id="KW-0324">Glycolysis</keyword>
<keyword id="KW-0413">Isomerase</keyword>
<comment type="function">
    <text evidence="1">Involved in the gluconeogenesis. Catalyzes stereospecifically the conversion of dihydroxyacetone phosphate (DHAP) to D-glyceraldehyde-3-phosphate (G3P).</text>
</comment>
<comment type="catalytic activity">
    <reaction evidence="1">
        <text>D-glyceraldehyde 3-phosphate = dihydroxyacetone phosphate</text>
        <dbReference type="Rhea" id="RHEA:18585"/>
        <dbReference type="ChEBI" id="CHEBI:57642"/>
        <dbReference type="ChEBI" id="CHEBI:59776"/>
        <dbReference type="EC" id="5.3.1.1"/>
    </reaction>
</comment>
<comment type="pathway">
    <text evidence="1">Carbohydrate biosynthesis; gluconeogenesis.</text>
</comment>
<comment type="pathway">
    <text evidence="1">Carbohydrate degradation; glycolysis; D-glyceraldehyde 3-phosphate from glycerone phosphate: step 1/1.</text>
</comment>
<comment type="subunit">
    <text evidence="1">Homodimer.</text>
</comment>
<comment type="subcellular location">
    <subcellularLocation>
        <location evidence="1">Cytoplasm</location>
    </subcellularLocation>
</comment>
<comment type="similarity">
    <text evidence="1">Belongs to the triosephosphate isomerase family.</text>
</comment>
<name>TPIS_CAMC1</name>
<organism>
    <name type="scientific">Campylobacter concisus (strain 13826)</name>
    <dbReference type="NCBI Taxonomy" id="360104"/>
    <lineage>
        <taxon>Bacteria</taxon>
        <taxon>Pseudomonadati</taxon>
        <taxon>Campylobacterota</taxon>
        <taxon>Epsilonproteobacteria</taxon>
        <taxon>Campylobacterales</taxon>
        <taxon>Campylobacteraceae</taxon>
        <taxon>Campylobacter</taxon>
    </lineage>
</organism>